<organism>
    <name type="scientific">Drosophila ananassae</name>
    <name type="common">Fruit fly</name>
    <dbReference type="NCBI Taxonomy" id="7217"/>
    <lineage>
        <taxon>Eukaryota</taxon>
        <taxon>Metazoa</taxon>
        <taxon>Ecdysozoa</taxon>
        <taxon>Arthropoda</taxon>
        <taxon>Hexapoda</taxon>
        <taxon>Insecta</taxon>
        <taxon>Pterygota</taxon>
        <taxon>Neoptera</taxon>
        <taxon>Endopterygota</taxon>
        <taxon>Diptera</taxon>
        <taxon>Brachycera</taxon>
        <taxon>Muscomorpha</taxon>
        <taxon>Ephydroidea</taxon>
        <taxon>Drosophilidae</taxon>
        <taxon>Drosophila</taxon>
        <taxon>Sophophora</taxon>
    </lineage>
</organism>
<evidence type="ECO:0000250" key="1"/>
<evidence type="ECO:0000250" key="2">
    <source>
        <dbReference type="UniProtKB" id="Q9VRP5"/>
    </source>
</evidence>
<evidence type="ECO:0000255" key="3">
    <source>
        <dbReference type="PROSITE-ProRule" id="PRU10092"/>
    </source>
</evidence>
<evidence type="ECO:0000255" key="4">
    <source>
        <dbReference type="PROSITE-ProRule" id="PRU10093"/>
    </source>
</evidence>
<evidence type="ECO:0000256" key="5">
    <source>
        <dbReference type="SAM" id="MobiDB-lite"/>
    </source>
</evidence>
<evidence type="ECO:0000305" key="6"/>
<protein>
    <recommendedName>
        <fullName>Ubiquitin carboxyl-terminal hydrolase 36</fullName>
        <ecNumber>3.4.19.12</ecNumber>
    </recommendedName>
    <alternativeName>
        <fullName>Deubiquitinating enzyme 36</fullName>
    </alternativeName>
    <alternativeName>
        <fullName>Protein scrawny</fullName>
    </alternativeName>
    <alternativeName>
        <fullName>Ubiquitin thioesterase 36</fullName>
    </alternativeName>
    <alternativeName>
        <fullName>Ubiquitin-specific-processing protease 36</fullName>
    </alternativeName>
</protein>
<reference key="1">
    <citation type="journal article" date="2007" name="Nature">
        <title>Evolution of genes and genomes on the Drosophila phylogeny.</title>
        <authorList>
            <consortium name="Drosophila 12 genomes consortium"/>
        </authorList>
    </citation>
    <scope>NUCLEOTIDE SEQUENCE [LARGE SCALE GENOMIC DNA]</scope>
    <source>
        <strain>Tucson 14024-0371.13</strain>
    </source>
</reference>
<accession>B3M3M6</accession>
<keyword id="KW-0378">Hydrolase</keyword>
<keyword id="KW-0539">Nucleus</keyword>
<keyword id="KW-0597">Phosphoprotein</keyword>
<keyword id="KW-0645">Protease</keyword>
<keyword id="KW-1185">Reference proteome</keyword>
<keyword id="KW-0788">Thiol protease</keyword>
<keyword id="KW-0833">Ubl conjugation pathway</keyword>
<sequence>MPVSVAVCETTNVVNAALRESLGVGIGSGGASSDDKSAGEDTNSLQNHIVANAKRILMTKIEYEEVPNYQEAVLENLKSKYIVIKPTNPTNGCNLNGNTANTFGNKNNAGKIVGANGHDNNGRKLSDHPNQNHNHANPNGHHANPNELPKPKRVLYPRENIRIGWKQSERKWQVGSGMINAGNTCYLNSTLQALFHIPALANWLVSEQAHMENCNVSESGSFCIICAMAKTLQATQTTQSAVRPFLIYTKLKQICKHMIVGRQEDAHEFLRFLVEAMERAYLMRFRNYKELDQLVKETTPLGQIFGGYLRSEVRCLSCNHVSITFQHFQDLLLDIRKSDSLEEAFEGYFSREKLEDFGYKCEGCKKKVSATKQFRLERAPITLCIQLKRFSMMGNKLTKQITFKPRIDLSKFAARSPAASVQPLIYRLVSMVTHLGVSQHCGHYTAIGSTEAGSYYNFDDSYVRPIAIQSVCNTNAYIMFYELDPLQTSSPAAARANGLRLTNGHGPVPVAVPATVSSPLPSPAKFIGPQLPPGGINGYSNGHGPKTTIQFKPQHQPSHQQNGVQQSAKSPLLSTHVKVEAAAGAAALAASAAPTANGNKSSSNHSNHKSVNQQHYLPISSEDEDSEDEVKARPTVQLPSMPKMDDCMDSGKPKSPVKTPVKTPLKSLVPYESASEEEEVVPLPNPNARKRSSDSSDSEHEPTTSSVQLNGHSKTNGSLSNGSSKSTDAIDEIFKSLKGYQAKKKSADSEDDDDDEDEPNNQLTNGWHPQKQSQSQSRSGPPSPKTPPSPAVIKSKTGIWKVTRDDGDDDEDDDDDDDEVVEEARAVRTPVKNHRNPFASSKTATDSPTTPGAKRQKLLNGSAIKTQQQPRAGNGYQSEATANGGTVNELLKQSHRGYSSSVLSWNGKPAELEKEPFVLVCAKRIAGHGSLDGSGSGSNTDIIDTEIPAAAVNFPSGSCSFSLLADARDQRQRDLADDEENEMDRGRQRKVKSGSAKISNSTPGYNPFMEFENQKRWHKNGGGGGFPRFYQNQNFRQGFQQRNKFKFNRFGGPGSAKFQQQRALQRHLAAGGGFTRRQPTHSAQQQQQQQS</sequence>
<feature type="chain" id="PRO_0000378495" description="Ubiquitin carboxyl-terminal hydrolase 36">
    <location>
        <begin position="1"/>
        <end position="1091"/>
    </location>
</feature>
<feature type="domain" description="USP">
    <location>
        <begin position="176"/>
        <end position="484"/>
    </location>
</feature>
<feature type="region of interest" description="Disordered" evidence="5">
    <location>
        <begin position="115"/>
        <end position="152"/>
    </location>
</feature>
<feature type="region of interest" description="Disordered" evidence="5">
    <location>
        <begin position="523"/>
        <end position="572"/>
    </location>
</feature>
<feature type="region of interest" description="Disordered" evidence="5">
    <location>
        <begin position="594"/>
        <end position="892"/>
    </location>
</feature>
<feature type="region of interest" description="Disordered" evidence="5">
    <location>
        <begin position="972"/>
        <end position="1007"/>
    </location>
</feature>
<feature type="region of interest" description="Disordered" evidence="5">
    <location>
        <begin position="1068"/>
        <end position="1091"/>
    </location>
</feature>
<feature type="compositionally biased region" description="Low complexity" evidence="5">
    <location>
        <begin position="128"/>
        <end position="146"/>
    </location>
</feature>
<feature type="compositionally biased region" description="Polar residues" evidence="5">
    <location>
        <begin position="547"/>
        <end position="572"/>
    </location>
</feature>
<feature type="compositionally biased region" description="Low complexity" evidence="5">
    <location>
        <begin position="594"/>
        <end position="612"/>
    </location>
</feature>
<feature type="compositionally biased region" description="Basic and acidic residues" evidence="5">
    <location>
        <begin position="643"/>
        <end position="652"/>
    </location>
</feature>
<feature type="compositionally biased region" description="Low complexity" evidence="5">
    <location>
        <begin position="653"/>
        <end position="667"/>
    </location>
</feature>
<feature type="compositionally biased region" description="Basic and acidic residues" evidence="5">
    <location>
        <begin position="691"/>
        <end position="702"/>
    </location>
</feature>
<feature type="compositionally biased region" description="Polar residues" evidence="5">
    <location>
        <begin position="703"/>
        <end position="727"/>
    </location>
</feature>
<feature type="compositionally biased region" description="Acidic residues" evidence="5">
    <location>
        <begin position="749"/>
        <end position="759"/>
    </location>
</feature>
<feature type="compositionally biased region" description="Low complexity" evidence="5">
    <location>
        <begin position="769"/>
        <end position="780"/>
    </location>
</feature>
<feature type="compositionally biased region" description="Pro residues" evidence="5">
    <location>
        <begin position="781"/>
        <end position="790"/>
    </location>
</feature>
<feature type="compositionally biased region" description="Acidic residues" evidence="5">
    <location>
        <begin position="806"/>
        <end position="821"/>
    </location>
</feature>
<feature type="compositionally biased region" description="Polar residues" evidence="5">
    <location>
        <begin position="838"/>
        <end position="850"/>
    </location>
</feature>
<feature type="compositionally biased region" description="Polar residues" evidence="5">
    <location>
        <begin position="863"/>
        <end position="886"/>
    </location>
</feature>
<feature type="active site" description="Nucleophile" evidence="3 4">
    <location>
        <position position="185"/>
    </location>
</feature>
<feature type="active site" description="Proton acceptor" evidence="3 4">
    <location>
        <position position="443"/>
    </location>
</feature>
<feature type="modified residue" description="Phosphoserine" evidence="1">
    <location>
        <position position="518"/>
    </location>
</feature>
<feature type="modified residue" description="Phosphoserine" evidence="1">
    <location>
        <position position="522"/>
    </location>
</feature>
<feature type="modified residue" description="Phosphothreonine" evidence="1">
    <location>
        <position position="659"/>
    </location>
</feature>
<feature type="modified residue" description="Phosphothreonine" evidence="1">
    <location>
        <position position="663"/>
    </location>
</feature>
<feature type="modified residue" description="Phosphoserine" evidence="1">
    <location>
        <position position="673"/>
    </location>
</feature>
<feature type="modified residue" description="Phosphoserine" evidence="1">
    <location>
        <position position="675"/>
    </location>
</feature>
<feature type="modified residue" description="Phosphoserine" evidence="1">
    <location>
        <position position="749"/>
    </location>
</feature>
<feature type="modified residue" description="Phosphoserine" evidence="1">
    <location>
        <position position="783"/>
    </location>
</feature>
<feature type="modified residue" description="Phosphothreonine" evidence="1">
    <location>
        <position position="786"/>
    </location>
</feature>
<feature type="modified residue" description="Phosphoserine" evidence="1">
    <location>
        <position position="789"/>
    </location>
</feature>
<feature type="modified residue" description="Phosphothreonine" evidence="1">
    <location>
        <position position="829"/>
    </location>
</feature>
<feature type="modified residue" description="Phosphoserine" evidence="1">
    <location>
        <position position="847"/>
    </location>
</feature>
<feature type="modified residue" description="Phosphothreonine" evidence="1">
    <location>
        <position position="850"/>
    </location>
</feature>
<dbReference type="EC" id="3.4.19.12"/>
<dbReference type="EMBL" id="CH902618">
    <property type="protein sequence ID" value="EDV40319.1"/>
    <property type="molecule type" value="Genomic_DNA"/>
</dbReference>
<dbReference type="SMR" id="B3M3M6"/>
<dbReference type="FunCoup" id="B3M3M6">
    <property type="interactions" value="528"/>
</dbReference>
<dbReference type="STRING" id="7217.B3M3M6"/>
<dbReference type="MEROPS" id="C19.097"/>
<dbReference type="GeneID" id="6506628"/>
<dbReference type="KEGG" id="dan:6506628"/>
<dbReference type="CTD" id="38648"/>
<dbReference type="eggNOG" id="KOG1865">
    <property type="taxonomic scope" value="Eukaryota"/>
</dbReference>
<dbReference type="HOGENOM" id="CLU_006208_0_0_1"/>
<dbReference type="InParanoid" id="B3M3M6"/>
<dbReference type="OMA" id="VCAMAKT"/>
<dbReference type="OrthoDB" id="420187at2759"/>
<dbReference type="PhylomeDB" id="B3M3M6"/>
<dbReference type="ChiTaRS" id="scny">
    <property type="organism name" value="fly"/>
</dbReference>
<dbReference type="Proteomes" id="UP000007801">
    <property type="component" value="Unassembled WGS sequence"/>
</dbReference>
<dbReference type="GO" id="GO:0005829">
    <property type="term" value="C:cytosol"/>
    <property type="evidence" value="ECO:0007669"/>
    <property type="project" value="TreeGrafter"/>
</dbReference>
<dbReference type="GO" id="GO:0005730">
    <property type="term" value="C:nucleolus"/>
    <property type="evidence" value="ECO:0000250"/>
    <property type="project" value="UniProtKB"/>
</dbReference>
<dbReference type="GO" id="GO:0004843">
    <property type="term" value="F:cysteine-type deubiquitinase activity"/>
    <property type="evidence" value="ECO:0000250"/>
    <property type="project" value="UniProtKB"/>
</dbReference>
<dbReference type="GO" id="GO:0061578">
    <property type="term" value="F:K63-linked deubiquitinase activity"/>
    <property type="evidence" value="ECO:0007669"/>
    <property type="project" value="EnsemblMetazoa"/>
</dbReference>
<dbReference type="GO" id="GO:0030718">
    <property type="term" value="P:germ-line stem cell population maintenance"/>
    <property type="evidence" value="ECO:0000250"/>
    <property type="project" value="UniProtKB"/>
</dbReference>
<dbReference type="GO" id="GO:0031507">
    <property type="term" value="P:heterochromatin formation"/>
    <property type="evidence" value="ECO:0007669"/>
    <property type="project" value="EnsemblMetazoa"/>
</dbReference>
<dbReference type="GO" id="GO:0002785">
    <property type="term" value="P:negative regulation of antimicrobial peptide production"/>
    <property type="evidence" value="ECO:0007669"/>
    <property type="project" value="EnsemblMetazoa"/>
</dbReference>
<dbReference type="GO" id="GO:0045824">
    <property type="term" value="P:negative regulation of innate immune response"/>
    <property type="evidence" value="ECO:0007669"/>
    <property type="project" value="EnsemblMetazoa"/>
</dbReference>
<dbReference type="GO" id="GO:0016242">
    <property type="term" value="P:negative regulation of macroautophagy"/>
    <property type="evidence" value="ECO:0000250"/>
    <property type="project" value="UniProtKB"/>
</dbReference>
<dbReference type="GO" id="GO:0061060">
    <property type="term" value="P:negative regulation of peptidoglycan recognition protein signaling pathway"/>
    <property type="evidence" value="ECO:0007669"/>
    <property type="project" value="EnsemblMetazoa"/>
</dbReference>
<dbReference type="GO" id="GO:1901800">
    <property type="term" value="P:positive regulation of proteasomal protein catabolic process"/>
    <property type="evidence" value="ECO:0007669"/>
    <property type="project" value="EnsemblMetazoa"/>
</dbReference>
<dbReference type="GO" id="GO:0016579">
    <property type="term" value="P:protein deubiquitination"/>
    <property type="evidence" value="ECO:0000250"/>
    <property type="project" value="UniProtKB"/>
</dbReference>
<dbReference type="GO" id="GO:0006508">
    <property type="term" value="P:proteolysis"/>
    <property type="evidence" value="ECO:0007669"/>
    <property type="project" value="UniProtKB-KW"/>
</dbReference>
<dbReference type="GO" id="GO:0042981">
    <property type="term" value="P:regulation of apoptotic process"/>
    <property type="evidence" value="ECO:0007669"/>
    <property type="project" value="EnsemblMetazoa"/>
</dbReference>
<dbReference type="GO" id="GO:0035019">
    <property type="term" value="P:somatic stem cell population maintenance"/>
    <property type="evidence" value="ECO:0000250"/>
    <property type="project" value="UniProtKB"/>
</dbReference>
<dbReference type="CDD" id="cd02661">
    <property type="entry name" value="Peptidase_C19E"/>
    <property type="match status" value="1"/>
</dbReference>
<dbReference type="FunFam" id="3.90.70.10:FF:000085">
    <property type="entry name" value="Ubiquitin carboxyl-terminal hydrolase 36"/>
    <property type="match status" value="1"/>
</dbReference>
<dbReference type="Gene3D" id="3.90.70.10">
    <property type="entry name" value="Cysteine proteinases"/>
    <property type="match status" value="1"/>
</dbReference>
<dbReference type="InterPro" id="IPR038765">
    <property type="entry name" value="Papain-like_cys_pep_sf"/>
</dbReference>
<dbReference type="InterPro" id="IPR050164">
    <property type="entry name" value="Peptidase_C19"/>
</dbReference>
<dbReference type="InterPro" id="IPR001394">
    <property type="entry name" value="Peptidase_C19_UCH"/>
</dbReference>
<dbReference type="InterPro" id="IPR018200">
    <property type="entry name" value="USP_CS"/>
</dbReference>
<dbReference type="InterPro" id="IPR028889">
    <property type="entry name" value="USP_dom"/>
</dbReference>
<dbReference type="PANTHER" id="PTHR24006">
    <property type="entry name" value="UBIQUITIN CARBOXYL-TERMINAL HYDROLASE"/>
    <property type="match status" value="1"/>
</dbReference>
<dbReference type="PANTHER" id="PTHR24006:SF758">
    <property type="entry name" value="UBIQUITIN CARBOXYL-TERMINAL HYDROLASE 36"/>
    <property type="match status" value="1"/>
</dbReference>
<dbReference type="Pfam" id="PF00443">
    <property type="entry name" value="UCH"/>
    <property type="match status" value="1"/>
</dbReference>
<dbReference type="SUPFAM" id="SSF54001">
    <property type="entry name" value="Cysteine proteinases"/>
    <property type="match status" value="1"/>
</dbReference>
<dbReference type="PROSITE" id="PS00972">
    <property type="entry name" value="USP_1"/>
    <property type="match status" value="1"/>
</dbReference>
<dbReference type="PROSITE" id="PS00973">
    <property type="entry name" value="USP_2"/>
    <property type="match status" value="1"/>
</dbReference>
<dbReference type="PROSITE" id="PS50235">
    <property type="entry name" value="USP_3"/>
    <property type="match status" value="1"/>
</dbReference>
<proteinExistence type="inferred from homology"/>
<gene>
    <name type="primary">Usp36</name>
    <name type="synonym">scny</name>
    <name type="ORF">GF23992</name>
</gene>
<name>UBP36_DROAN</name>
<comment type="function">
    <text evidence="2">Required for maintaining multiple types of adult stem cells, including male and female germline, epithelial follicle cell and intestinal stem cells. May function as a transcriptional repressor by continually deubiquiting histone H2B at the promoters of genes critical for cellular differentiation, thereby preventing histone H3 'Lys-4' trimethylation (H3K4). Controls selective autophagy activation by ubiquitinated proteins.</text>
</comment>
<comment type="catalytic activity">
    <reaction>
        <text>Thiol-dependent hydrolysis of ester, thioester, amide, peptide and isopeptide bonds formed by the C-terminal Gly of ubiquitin (a 76-residue protein attached to proteins as an intracellular targeting signal).</text>
        <dbReference type="EC" id="3.4.19.12"/>
    </reaction>
</comment>
<comment type="subunit">
    <text evidence="1">Interacts with atms/PAF1, but not with CycT.</text>
</comment>
<comment type="subcellular location">
    <subcellularLocation>
        <location evidence="1">Nucleus</location>
        <location evidence="1">Nucleolus</location>
    </subcellularLocation>
</comment>
<comment type="similarity">
    <text evidence="6">Belongs to the peptidase C19 family.</text>
</comment>